<dbReference type="EMBL" id="GG704914">
    <property type="protein sequence ID" value="EAS33329.3"/>
    <property type="molecule type" value="Genomic_DNA"/>
</dbReference>
<dbReference type="RefSeq" id="XP_001244912.1">
    <property type="nucleotide sequence ID" value="XM_001244911.2"/>
</dbReference>
<dbReference type="SMR" id="Q1DZB0"/>
<dbReference type="STRING" id="246410.Q1DZB0"/>
<dbReference type="GeneID" id="4564399"/>
<dbReference type="KEGG" id="cim:CIMG_04353"/>
<dbReference type="VEuPathDB" id="FungiDB:CIMG_04353"/>
<dbReference type="InParanoid" id="Q1DZB0"/>
<dbReference type="OMA" id="AGWFIRN"/>
<dbReference type="OrthoDB" id="15082at2759"/>
<dbReference type="Proteomes" id="UP000001261">
    <property type="component" value="Unassembled WGS sequence"/>
</dbReference>
<dbReference type="GO" id="GO:0016282">
    <property type="term" value="C:eukaryotic 43S preinitiation complex"/>
    <property type="evidence" value="ECO:0007669"/>
    <property type="project" value="UniProtKB-UniRule"/>
</dbReference>
<dbReference type="GO" id="GO:0033290">
    <property type="term" value="C:eukaryotic 48S preinitiation complex"/>
    <property type="evidence" value="ECO:0007669"/>
    <property type="project" value="UniProtKB-UniRule"/>
</dbReference>
<dbReference type="GO" id="GO:0005852">
    <property type="term" value="C:eukaryotic translation initiation factor 3 complex"/>
    <property type="evidence" value="ECO:0007669"/>
    <property type="project" value="UniProtKB-UniRule"/>
</dbReference>
<dbReference type="GO" id="GO:0003743">
    <property type="term" value="F:translation initiation factor activity"/>
    <property type="evidence" value="ECO:0007669"/>
    <property type="project" value="UniProtKB-UniRule"/>
</dbReference>
<dbReference type="GO" id="GO:0001732">
    <property type="term" value="P:formation of cytoplasmic translation initiation complex"/>
    <property type="evidence" value="ECO:0007669"/>
    <property type="project" value="UniProtKB-UniRule"/>
</dbReference>
<dbReference type="HAMAP" id="MF_03011">
    <property type="entry name" value="eIF3l"/>
    <property type="match status" value="1"/>
</dbReference>
<dbReference type="InterPro" id="IPR019382">
    <property type="entry name" value="eIF3l"/>
</dbReference>
<dbReference type="InterPro" id="IPR000717">
    <property type="entry name" value="PCI_dom"/>
</dbReference>
<dbReference type="PANTHER" id="PTHR13242">
    <property type="entry name" value="EUKARYOTIC TRANSLATION INITIATION FACTOR 3"/>
    <property type="match status" value="1"/>
</dbReference>
<dbReference type="PANTHER" id="PTHR13242:SF0">
    <property type="entry name" value="EUKARYOTIC TRANSLATION INITIATION FACTOR 3 SUBUNIT L"/>
    <property type="match status" value="1"/>
</dbReference>
<dbReference type="Pfam" id="PF10255">
    <property type="entry name" value="Paf67"/>
    <property type="match status" value="1"/>
</dbReference>
<dbReference type="PROSITE" id="PS50250">
    <property type="entry name" value="PCI"/>
    <property type="match status" value="1"/>
</dbReference>
<feature type="chain" id="PRO_0000364263" description="Eukaryotic translation initiation factor 3 subunit L">
    <location>
        <begin position="1"/>
        <end position="481"/>
    </location>
</feature>
<feature type="domain" description="PCI" evidence="2">
    <location>
        <begin position="262"/>
        <end position="457"/>
    </location>
</feature>
<feature type="region of interest" description="Disordered" evidence="3">
    <location>
        <begin position="1"/>
        <end position="22"/>
    </location>
</feature>
<sequence>MSVDARTAYPGSRPPANMQDESDVEEEALVNNYKEQVHFDDGMSELDRTTSLGAASQTQGLQAQLAAAATPLEFQATLETKFASYDNYCSLFHYILNSDGPVDLEVPSYYWAWDVIDEFIYQFESFCRYRNRVARTGSNEEEAQLLRENPNTWGCYSVLNVLYSLIQRSQINEQLAAIKANEDPMAVAGDYGSRPLYRMLGYFSIIGLLRVHCLLGDFSLALKTLDDIEMNKKAMFARVMAAHFTTYYYVGFSYMMMRRYADAIRTFSHILVYVSRTKNFQKGRESYDAIAKKNDQILALIAICVSFHPTRLDDTIHSGLREKYGDQFIRLQRGGPDALPLYEELFRSACPKFISPTPPDFDNPALNIDPVDHHTAVFMDEVRNTLYNPTVKSYLKLYTTMDLKKLAGFLEVEPEQLRSWLLVNKLRSRQVRWSEGGLLEGEIVNSSDLDYAIEGNLIHISETKAGRRLVDWYLRNLARTY</sequence>
<keyword id="KW-0963">Cytoplasm</keyword>
<keyword id="KW-0396">Initiation factor</keyword>
<keyword id="KW-0648">Protein biosynthesis</keyword>
<keyword id="KW-1185">Reference proteome</keyword>
<comment type="function">
    <text evidence="1">Component of the eukaryotic translation initiation factor 3 (eIF-3) complex, which is involved in protein synthesis of a specialized repertoire of mRNAs and, together with other initiation factors, stimulates binding of mRNA and methionyl-tRNAi to the 40S ribosome. The eIF-3 complex specifically targets and initiates translation of a subset of mRNAs involved in cell proliferation.</text>
</comment>
<comment type="subunit">
    <text evidence="1">Component of the eukaryotic translation initiation factor 3 (eIF-3) complex.</text>
</comment>
<comment type="subcellular location">
    <subcellularLocation>
        <location evidence="1">Cytoplasm</location>
    </subcellularLocation>
</comment>
<comment type="similarity">
    <text evidence="1">Belongs to the eIF-3 subunit L family.</text>
</comment>
<protein>
    <recommendedName>
        <fullName evidence="1">Eukaryotic translation initiation factor 3 subunit L</fullName>
        <shortName evidence="1">eIF3l</shortName>
    </recommendedName>
</protein>
<evidence type="ECO:0000255" key="1">
    <source>
        <dbReference type="HAMAP-Rule" id="MF_03011"/>
    </source>
</evidence>
<evidence type="ECO:0000255" key="2">
    <source>
        <dbReference type="PROSITE-ProRule" id="PRU01185"/>
    </source>
</evidence>
<evidence type="ECO:0000256" key="3">
    <source>
        <dbReference type="SAM" id="MobiDB-lite"/>
    </source>
</evidence>
<name>EIF3L_COCIM</name>
<organism>
    <name type="scientific">Coccidioides immitis (strain RS)</name>
    <name type="common">Valley fever fungus</name>
    <dbReference type="NCBI Taxonomy" id="246410"/>
    <lineage>
        <taxon>Eukaryota</taxon>
        <taxon>Fungi</taxon>
        <taxon>Dikarya</taxon>
        <taxon>Ascomycota</taxon>
        <taxon>Pezizomycotina</taxon>
        <taxon>Eurotiomycetes</taxon>
        <taxon>Eurotiomycetidae</taxon>
        <taxon>Onygenales</taxon>
        <taxon>Onygenaceae</taxon>
        <taxon>Coccidioides</taxon>
    </lineage>
</organism>
<reference key="1">
    <citation type="journal article" date="2009" name="Genome Res.">
        <title>Comparative genomic analyses of the human fungal pathogens Coccidioides and their relatives.</title>
        <authorList>
            <person name="Sharpton T.J."/>
            <person name="Stajich J.E."/>
            <person name="Rounsley S.D."/>
            <person name="Gardner M.J."/>
            <person name="Wortman J.R."/>
            <person name="Jordar V.S."/>
            <person name="Maiti R."/>
            <person name="Kodira C.D."/>
            <person name="Neafsey D.E."/>
            <person name="Zeng Q."/>
            <person name="Hung C.-Y."/>
            <person name="McMahan C."/>
            <person name="Muszewska A."/>
            <person name="Grynberg M."/>
            <person name="Mandel M.A."/>
            <person name="Kellner E.M."/>
            <person name="Barker B.M."/>
            <person name="Galgiani J.N."/>
            <person name="Orbach M.J."/>
            <person name="Kirkland T.N."/>
            <person name="Cole G.T."/>
            <person name="Henn M.R."/>
            <person name="Birren B.W."/>
            <person name="Taylor J.W."/>
        </authorList>
    </citation>
    <scope>NUCLEOTIDE SEQUENCE [LARGE SCALE GENOMIC DNA]</scope>
    <source>
        <strain>RS</strain>
    </source>
</reference>
<reference key="2">
    <citation type="journal article" date="2010" name="Genome Res.">
        <title>Population genomic sequencing of Coccidioides fungi reveals recent hybridization and transposon control.</title>
        <authorList>
            <person name="Neafsey D.E."/>
            <person name="Barker B.M."/>
            <person name="Sharpton T.J."/>
            <person name="Stajich J.E."/>
            <person name="Park D.J."/>
            <person name="Whiston E."/>
            <person name="Hung C.-Y."/>
            <person name="McMahan C."/>
            <person name="White J."/>
            <person name="Sykes S."/>
            <person name="Heiman D."/>
            <person name="Young S."/>
            <person name="Zeng Q."/>
            <person name="Abouelleil A."/>
            <person name="Aftuck L."/>
            <person name="Bessette D."/>
            <person name="Brown A."/>
            <person name="FitzGerald M."/>
            <person name="Lui A."/>
            <person name="Macdonald J.P."/>
            <person name="Priest M."/>
            <person name="Orbach M.J."/>
            <person name="Galgiani J.N."/>
            <person name="Kirkland T.N."/>
            <person name="Cole G.T."/>
            <person name="Birren B.W."/>
            <person name="Henn M.R."/>
            <person name="Taylor J.W."/>
            <person name="Rounsley S.D."/>
        </authorList>
    </citation>
    <scope>GENOME REANNOTATION</scope>
    <source>
        <strain>RS</strain>
    </source>
</reference>
<proteinExistence type="inferred from homology"/>
<accession>Q1DZB0</accession>
<accession>J3KDQ3</accession>
<gene>
    <name type="ORF">CIMG_04353</name>
</gene>